<feature type="chain" id="PRO_0000299596" description="Protein FAM90A16">
    <location>
        <begin position="1"/>
        <end position="464"/>
    </location>
</feature>
<feature type="region of interest" description="Disordered" evidence="1">
    <location>
        <begin position="1"/>
        <end position="42"/>
    </location>
</feature>
<feature type="region of interest" description="Disordered" evidence="1">
    <location>
        <begin position="70"/>
        <end position="389"/>
    </location>
</feature>
<feature type="region of interest" description="Disordered" evidence="1">
    <location>
        <begin position="415"/>
        <end position="437"/>
    </location>
</feature>
<feature type="compositionally biased region" description="Basic and acidic residues" evidence="1">
    <location>
        <begin position="74"/>
        <end position="89"/>
    </location>
</feature>
<feature type="compositionally biased region" description="Basic and acidic residues" evidence="1">
    <location>
        <begin position="97"/>
        <end position="114"/>
    </location>
</feature>
<feature type="compositionally biased region" description="Low complexity" evidence="1">
    <location>
        <begin position="180"/>
        <end position="197"/>
    </location>
</feature>
<proteinExistence type="inferred from homology"/>
<name>F90AG_HUMAN</name>
<comment type="similarity">
    <text evidence="2">Belongs to the FAM90 family.</text>
</comment>
<accession>P0DV73</accession>
<accession>A6NEW6</accession>
<evidence type="ECO:0000256" key="1">
    <source>
        <dbReference type="SAM" id="MobiDB-lite"/>
    </source>
</evidence>
<evidence type="ECO:0000305" key="2"/>
<evidence type="ECO:0000312" key="3">
    <source>
        <dbReference type="HGNC" id="HGNC:32264"/>
    </source>
</evidence>
<reference key="1">
    <citation type="journal article" date="2006" name="Nature">
        <title>DNA sequence and analysis of human chromosome 8.</title>
        <authorList>
            <person name="Nusbaum C."/>
            <person name="Mikkelsen T.S."/>
            <person name="Zody M.C."/>
            <person name="Asakawa S."/>
            <person name="Taudien S."/>
            <person name="Garber M."/>
            <person name="Kodira C.D."/>
            <person name="Schueler M.G."/>
            <person name="Shimizu A."/>
            <person name="Whittaker C.A."/>
            <person name="Chang J.L."/>
            <person name="Cuomo C.A."/>
            <person name="Dewar K."/>
            <person name="FitzGerald M.G."/>
            <person name="Yang X."/>
            <person name="Allen N.R."/>
            <person name="Anderson S."/>
            <person name="Asakawa T."/>
            <person name="Blechschmidt K."/>
            <person name="Bloom T."/>
            <person name="Borowsky M.L."/>
            <person name="Butler J."/>
            <person name="Cook A."/>
            <person name="Corum B."/>
            <person name="DeArellano K."/>
            <person name="DeCaprio D."/>
            <person name="Dooley K.T."/>
            <person name="Dorris L. III"/>
            <person name="Engels R."/>
            <person name="Gloeckner G."/>
            <person name="Hafez N."/>
            <person name="Hagopian D.S."/>
            <person name="Hall J.L."/>
            <person name="Ishikawa S.K."/>
            <person name="Jaffe D.B."/>
            <person name="Kamat A."/>
            <person name="Kudoh J."/>
            <person name="Lehmann R."/>
            <person name="Lokitsang T."/>
            <person name="Macdonald P."/>
            <person name="Major J.E."/>
            <person name="Matthews C.D."/>
            <person name="Mauceli E."/>
            <person name="Menzel U."/>
            <person name="Mihalev A.H."/>
            <person name="Minoshima S."/>
            <person name="Murayama Y."/>
            <person name="Naylor J.W."/>
            <person name="Nicol R."/>
            <person name="Nguyen C."/>
            <person name="O'Leary S.B."/>
            <person name="O'Neill K."/>
            <person name="Parker S.C.J."/>
            <person name="Polley A."/>
            <person name="Raymond C.K."/>
            <person name="Reichwald K."/>
            <person name="Rodriguez J."/>
            <person name="Sasaki T."/>
            <person name="Schilhabel M."/>
            <person name="Siddiqui R."/>
            <person name="Smith C.L."/>
            <person name="Sneddon T.P."/>
            <person name="Talamas J.A."/>
            <person name="Tenzin P."/>
            <person name="Topham K."/>
            <person name="Venkataraman V."/>
            <person name="Wen G."/>
            <person name="Yamazaki S."/>
            <person name="Young S.K."/>
            <person name="Zeng Q."/>
            <person name="Zimmer A.R."/>
            <person name="Rosenthal A."/>
            <person name="Birren B.W."/>
            <person name="Platzer M."/>
            <person name="Shimizu N."/>
            <person name="Lander E.S."/>
        </authorList>
    </citation>
    <scope>NUCLEOTIDE SEQUENCE [LARGE SCALE GENOMIC DNA]</scope>
</reference>
<sequence length="464" mass="49759">MMARRDPKSWAKRLVRAQTLQKQRRAPVGPRAPPPDEEDPRLKCKNCGAFGHTARSTRCPMKCWKAALVPATLGKKEGKENLKPWKPRVEANPGPLNKDKGEKEERPRQQDPQRKALLHMFSGKPPEKPLPNGKGSTESSDHLRVASGPMPVHTTSKRPRVDPVLADRSAAEMSGRGSVLASLSPLRKASLSSSSSLGPKERQTGAAADIPQPAVRHQGREPLLVVKPTHSRPEGGCREVPQAASKTHGLLQAARPQAQDKRPAVTSQPCPPAATHSLGLGSNLSFGPGAKRPAQAPIQACLNFPKKPRLGPFQIPESAIQGGELGAPENLQPPPAATELGPSTSPQMGRRTPAQVPSVDRQPPHSTPCLPTAQACTMSHHSAASHDGAQPLRVLFRRLENGRWSSSLLAAPSFHSPEKPGAFLAQSPHVSEKSEAPCVRVPPSVLYEDLQVSSSSEDSDSDLE</sequence>
<protein>
    <recommendedName>
        <fullName>Protein FAM90A16</fullName>
    </recommendedName>
</protein>
<organism>
    <name type="scientific">Homo sapiens</name>
    <name type="common">Human</name>
    <dbReference type="NCBI Taxonomy" id="9606"/>
    <lineage>
        <taxon>Eukaryota</taxon>
        <taxon>Metazoa</taxon>
        <taxon>Chordata</taxon>
        <taxon>Craniata</taxon>
        <taxon>Vertebrata</taxon>
        <taxon>Euteleostomi</taxon>
        <taxon>Mammalia</taxon>
        <taxon>Eutheria</taxon>
        <taxon>Euarchontoglires</taxon>
        <taxon>Primates</taxon>
        <taxon>Haplorrhini</taxon>
        <taxon>Catarrhini</taxon>
        <taxon>Hominidae</taxon>
        <taxon>Homo</taxon>
    </lineage>
</organism>
<gene>
    <name evidence="3" type="primary">FAM90A16</name>
    <name evidence="3" type="synonym">FAM90A16P</name>
</gene>
<dbReference type="EMBL" id="AC084121">
    <property type="status" value="NOT_ANNOTATED_CDS"/>
    <property type="molecule type" value="Genomic_DNA"/>
</dbReference>
<dbReference type="CCDS" id="CCDS94253.1"/>
<dbReference type="RefSeq" id="NP_001384325.1">
    <property type="nucleotide sequence ID" value="NM_001397396.1"/>
</dbReference>
<dbReference type="FunCoup" id="P0DV73">
    <property type="interactions" value="1"/>
</dbReference>
<dbReference type="iPTMnet" id="P0DV73"/>
<dbReference type="PhosphoSitePlus" id="P0DV73"/>
<dbReference type="Ensembl" id="ENST00000648174.1">
    <property type="protein sequence ID" value="ENSP00000497037.1"/>
    <property type="gene ID" value="ENSG00000285620.1"/>
</dbReference>
<dbReference type="GeneID" id="441323"/>
<dbReference type="MANE-Select" id="ENST00000648174.1">
    <property type="protein sequence ID" value="ENSP00000497037.1"/>
    <property type="RefSeq nucleotide sequence ID" value="NM_001397396.1"/>
    <property type="RefSeq protein sequence ID" value="NP_001384325.1"/>
</dbReference>
<dbReference type="AGR" id="HGNC:32264"/>
<dbReference type="GeneCards" id="FAM90A16"/>
<dbReference type="HGNC" id="HGNC:32264">
    <property type="gene designation" value="FAM90A16"/>
</dbReference>
<dbReference type="HPA" id="ENSG00000285620">
    <property type="expression patterns" value="Not detected"/>
</dbReference>
<dbReference type="OMA" id="STESCHY"/>
<dbReference type="PRO" id="PR:P0DV73"/>
<dbReference type="Proteomes" id="UP000005640">
    <property type="component" value="Chromosome 8"/>
</dbReference>
<dbReference type="InterPro" id="IPR039213">
    <property type="entry name" value="FAM90"/>
</dbReference>
<dbReference type="InterPro" id="IPR041670">
    <property type="entry name" value="Znf-CCHC_6"/>
</dbReference>
<dbReference type="PANTHER" id="PTHR16035:SF14">
    <property type="entry name" value="FAMILY WITH SEQUENCE SIMILARITY 90 MEMBER A11, PSEUDOGENE-RELATED"/>
    <property type="match status" value="1"/>
</dbReference>
<dbReference type="PANTHER" id="PTHR16035">
    <property type="entry name" value="PROTEIN FAM90A1"/>
    <property type="match status" value="1"/>
</dbReference>
<dbReference type="Pfam" id="PF15288">
    <property type="entry name" value="zf-CCHC_6"/>
    <property type="match status" value="1"/>
</dbReference>
<keyword id="KW-1185">Reference proteome</keyword>